<comment type="function">
    <text evidence="1">Catalyzes phosphorolysis of the pyrimidine nucleosides uridine, thymidine and 2'-deoxyuridine with the formation of the corresponding pyrimidine base and ribose-1-phosphate.</text>
</comment>
<comment type="catalytic activity">
    <reaction evidence="1">
        <text>uridine + phosphate = alpha-D-ribose 1-phosphate + uracil</text>
        <dbReference type="Rhea" id="RHEA:24388"/>
        <dbReference type="ChEBI" id="CHEBI:16704"/>
        <dbReference type="ChEBI" id="CHEBI:17568"/>
        <dbReference type="ChEBI" id="CHEBI:43474"/>
        <dbReference type="ChEBI" id="CHEBI:57720"/>
        <dbReference type="EC" id="2.4.2.2"/>
    </reaction>
</comment>
<comment type="catalytic activity">
    <reaction evidence="1">
        <text>thymidine + phosphate = 2-deoxy-alpha-D-ribose 1-phosphate + thymine</text>
        <dbReference type="Rhea" id="RHEA:16037"/>
        <dbReference type="ChEBI" id="CHEBI:17748"/>
        <dbReference type="ChEBI" id="CHEBI:17821"/>
        <dbReference type="ChEBI" id="CHEBI:43474"/>
        <dbReference type="ChEBI" id="CHEBI:57259"/>
        <dbReference type="EC" id="2.4.2.2"/>
    </reaction>
</comment>
<comment type="catalytic activity">
    <reaction evidence="1">
        <text>2'-deoxyuridine + phosphate = 2-deoxy-alpha-D-ribose 1-phosphate + uracil</text>
        <dbReference type="Rhea" id="RHEA:22824"/>
        <dbReference type="ChEBI" id="CHEBI:16450"/>
        <dbReference type="ChEBI" id="CHEBI:17568"/>
        <dbReference type="ChEBI" id="CHEBI:43474"/>
        <dbReference type="ChEBI" id="CHEBI:57259"/>
        <dbReference type="EC" id="2.4.2.2"/>
    </reaction>
</comment>
<comment type="cofactor">
    <cofactor evidence="1">
        <name>K(+)</name>
        <dbReference type="ChEBI" id="CHEBI:29103"/>
    </cofactor>
    <text evidence="1">Binds 1 K(+) ion per subunit.</text>
</comment>
<comment type="subunit">
    <text evidence="1">Homodimer.</text>
</comment>
<comment type="similarity">
    <text evidence="2">Belongs to the thymidine/pyrimidine-nucleoside phosphorylase family.</text>
</comment>
<name>PDP_STAES</name>
<organism>
    <name type="scientific">Staphylococcus epidermidis (strain ATCC 12228 / FDA PCI 1200)</name>
    <dbReference type="NCBI Taxonomy" id="176280"/>
    <lineage>
        <taxon>Bacteria</taxon>
        <taxon>Bacillati</taxon>
        <taxon>Bacillota</taxon>
        <taxon>Bacilli</taxon>
        <taxon>Bacillales</taxon>
        <taxon>Staphylococcaceae</taxon>
        <taxon>Staphylococcus</taxon>
    </lineage>
</organism>
<proteinExistence type="inferred from homology"/>
<accession>Q8CNH8</accession>
<protein>
    <recommendedName>
        <fullName>Pyrimidine-nucleoside phosphorylase</fullName>
        <shortName>PYNP</shortName>
        <shortName>Py-NPase</shortName>
        <ecNumber>2.4.2.2</ecNumber>
    </recommendedName>
</protein>
<gene>
    <name type="primary">pdp</name>
    <name type="synonym">pyn</name>
    <name type="ordered locus">SE_1735</name>
</gene>
<evidence type="ECO:0000250" key="1">
    <source>
        <dbReference type="UniProtKB" id="P77836"/>
    </source>
</evidence>
<evidence type="ECO:0000305" key="2"/>
<dbReference type="EC" id="2.4.2.2"/>
<dbReference type="EMBL" id="AE015929">
    <property type="protein sequence ID" value="AAO05334.1"/>
    <property type="molecule type" value="Genomic_DNA"/>
</dbReference>
<dbReference type="RefSeq" id="NP_765290.1">
    <property type="nucleotide sequence ID" value="NC_004461.1"/>
</dbReference>
<dbReference type="RefSeq" id="WP_002485262.1">
    <property type="nucleotide sequence ID" value="NZ_WBME01000041.1"/>
</dbReference>
<dbReference type="SMR" id="Q8CNH8"/>
<dbReference type="KEGG" id="sep:SE_1735"/>
<dbReference type="PATRIC" id="fig|176280.10.peg.1695"/>
<dbReference type="eggNOG" id="COG0213">
    <property type="taxonomic scope" value="Bacteria"/>
</dbReference>
<dbReference type="HOGENOM" id="CLU_025040_0_1_9"/>
<dbReference type="OrthoDB" id="9763887at2"/>
<dbReference type="Proteomes" id="UP000001411">
    <property type="component" value="Chromosome"/>
</dbReference>
<dbReference type="GO" id="GO:0005829">
    <property type="term" value="C:cytosol"/>
    <property type="evidence" value="ECO:0007669"/>
    <property type="project" value="TreeGrafter"/>
</dbReference>
<dbReference type="GO" id="GO:0004645">
    <property type="term" value="F:1,4-alpha-oligoglucan phosphorylase activity"/>
    <property type="evidence" value="ECO:0007669"/>
    <property type="project" value="InterPro"/>
</dbReference>
<dbReference type="GO" id="GO:0047847">
    <property type="term" value="F:deoxyuridine phosphorylase activity"/>
    <property type="evidence" value="ECO:0007669"/>
    <property type="project" value="RHEA"/>
</dbReference>
<dbReference type="GO" id="GO:0046872">
    <property type="term" value="F:metal ion binding"/>
    <property type="evidence" value="ECO:0007669"/>
    <property type="project" value="UniProtKB-KW"/>
</dbReference>
<dbReference type="GO" id="GO:0009032">
    <property type="term" value="F:thymidine phosphorylase activity"/>
    <property type="evidence" value="ECO:0007669"/>
    <property type="project" value="TreeGrafter"/>
</dbReference>
<dbReference type="GO" id="GO:0004850">
    <property type="term" value="F:uridine phosphorylase activity"/>
    <property type="evidence" value="ECO:0007669"/>
    <property type="project" value="RHEA"/>
</dbReference>
<dbReference type="GO" id="GO:0006206">
    <property type="term" value="P:pyrimidine nucleobase metabolic process"/>
    <property type="evidence" value="ECO:0007669"/>
    <property type="project" value="InterPro"/>
</dbReference>
<dbReference type="GO" id="GO:0006213">
    <property type="term" value="P:pyrimidine nucleoside metabolic process"/>
    <property type="evidence" value="ECO:0007669"/>
    <property type="project" value="InterPro"/>
</dbReference>
<dbReference type="FunFam" id="1.20.970.10:FF:000002">
    <property type="entry name" value="Pyrimidine-nucleoside phosphorylase"/>
    <property type="match status" value="1"/>
</dbReference>
<dbReference type="FunFam" id="3.40.1030.10:FF:000003">
    <property type="entry name" value="Pyrimidine-nucleoside phosphorylase"/>
    <property type="match status" value="1"/>
</dbReference>
<dbReference type="Gene3D" id="3.40.1030.10">
    <property type="entry name" value="Nucleoside phosphorylase/phosphoribosyltransferase catalytic domain"/>
    <property type="match status" value="1"/>
</dbReference>
<dbReference type="Gene3D" id="3.90.1170.30">
    <property type="entry name" value="Pyrimidine nucleoside phosphorylase-like, C-terminal domain"/>
    <property type="match status" value="1"/>
</dbReference>
<dbReference type="Gene3D" id="1.20.970.10">
    <property type="entry name" value="Transferase, Pyrimidine Nucleoside Phosphorylase, Chain C"/>
    <property type="match status" value="1"/>
</dbReference>
<dbReference type="InterPro" id="IPR000312">
    <property type="entry name" value="Glycosyl_Trfase_fam3"/>
</dbReference>
<dbReference type="InterPro" id="IPR017459">
    <property type="entry name" value="Glycosyl_Trfase_fam3_N_dom"/>
</dbReference>
<dbReference type="InterPro" id="IPR036320">
    <property type="entry name" value="Glycosyl_Trfase_fam3_N_dom_sf"/>
</dbReference>
<dbReference type="InterPro" id="IPR035902">
    <property type="entry name" value="Nuc_phospho_transferase"/>
</dbReference>
<dbReference type="InterPro" id="IPR036566">
    <property type="entry name" value="PYNP-like_C_sf"/>
</dbReference>
<dbReference type="InterPro" id="IPR013102">
    <property type="entry name" value="PYNP_C"/>
</dbReference>
<dbReference type="InterPro" id="IPR018090">
    <property type="entry name" value="Pyrmidine_PPas_bac/euk"/>
</dbReference>
<dbReference type="InterPro" id="IPR017872">
    <property type="entry name" value="Pyrmidine_PPase_CS"/>
</dbReference>
<dbReference type="InterPro" id="IPR000053">
    <property type="entry name" value="Thymidine/pyrmidine_PPase"/>
</dbReference>
<dbReference type="NCBIfam" id="NF004490">
    <property type="entry name" value="PRK05820.1"/>
    <property type="match status" value="1"/>
</dbReference>
<dbReference type="NCBIfam" id="NF004747">
    <property type="entry name" value="PRK06078.1"/>
    <property type="match status" value="1"/>
</dbReference>
<dbReference type="NCBIfam" id="TIGR02644">
    <property type="entry name" value="Y_phosphoryl"/>
    <property type="match status" value="1"/>
</dbReference>
<dbReference type="PANTHER" id="PTHR10515">
    <property type="entry name" value="THYMIDINE PHOSPHORYLASE"/>
    <property type="match status" value="1"/>
</dbReference>
<dbReference type="PANTHER" id="PTHR10515:SF0">
    <property type="entry name" value="THYMIDINE PHOSPHORYLASE"/>
    <property type="match status" value="1"/>
</dbReference>
<dbReference type="Pfam" id="PF02885">
    <property type="entry name" value="Glycos_trans_3N"/>
    <property type="match status" value="1"/>
</dbReference>
<dbReference type="Pfam" id="PF00591">
    <property type="entry name" value="Glycos_transf_3"/>
    <property type="match status" value="1"/>
</dbReference>
<dbReference type="Pfam" id="PF07831">
    <property type="entry name" value="PYNP_C"/>
    <property type="match status" value="1"/>
</dbReference>
<dbReference type="PIRSF" id="PIRSF000478">
    <property type="entry name" value="TP_PyNP"/>
    <property type="match status" value="1"/>
</dbReference>
<dbReference type="SMART" id="SM00941">
    <property type="entry name" value="PYNP_C"/>
    <property type="match status" value="1"/>
</dbReference>
<dbReference type="SUPFAM" id="SSF52418">
    <property type="entry name" value="Nucleoside phosphorylase/phosphoribosyltransferase catalytic domain"/>
    <property type="match status" value="1"/>
</dbReference>
<dbReference type="SUPFAM" id="SSF47648">
    <property type="entry name" value="Nucleoside phosphorylase/phosphoribosyltransferase N-terminal domain"/>
    <property type="match status" value="1"/>
</dbReference>
<dbReference type="SUPFAM" id="SSF54680">
    <property type="entry name" value="Pyrimidine nucleoside phosphorylase C-terminal domain"/>
    <property type="match status" value="1"/>
</dbReference>
<dbReference type="PROSITE" id="PS00647">
    <property type="entry name" value="THYMID_PHOSPHORYLASE"/>
    <property type="match status" value="1"/>
</dbReference>
<reference key="1">
    <citation type="journal article" date="2003" name="Mol. Microbiol.">
        <title>Genome-based analysis of virulence genes in a non-biofilm-forming Staphylococcus epidermidis strain (ATCC 12228).</title>
        <authorList>
            <person name="Zhang Y.-Q."/>
            <person name="Ren S.-X."/>
            <person name="Li H.-L."/>
            <person name="Wang Y.-X."/>
            <person name="Fu G."/>
            <person name="Yang J."/>
            <person name="Qin Z.-Q."/>
            <person name="Miao Y.-G."/>
            <person name="Wang W.-Y."/>
            <person name="Chen R.-S."/>
            <person name="Shen Y."/>
            <person name="Chen Z."/>
            <person name="Yuan Z.-H."/>
            <person name="Zhao G.-P."/>
            <person name="Qu D."/>
            <person name="Danchin A."/>
            <person name="Wen Y.-M."/>
        </authorList>
    </citation>
    <scope>NUCLEOTIDE SEQUENCE [LARGE SCALE GENOMIC DNA]</scope>
    <source>
        <strain>ATCC 12228 / FDA PCI 1200</strain>
    </source>
</reference>
<sequence>MRMIDIIEKKRDGKSLTKEEIEFFVNGYTHEEVPDYQASSLAMAIFFQDMNDEERAALTMSMVNSGEKIDLSDINGIKVDKHSTGGVGDTTTLVLAPLVAAVGVPVAKMSGRGLGHTGGTIDKLESVKGFNVEISEKDFIKLVNDNQVAVIGQSGNLTPADKKLYALRDVTGTVNSIPLIASSIMSKKIAAGADAIVLDVKTGSGAFMKTLDDAEALAHAMVRIGNNVGRNTMAIISDMSQPLGNAIGNALELKEAISTLKGNGPKDLTELVLTLGSQMVVLAEQATSLDEARQMLIDAIKTGKALNKFKTFLSNQGGDDSIVDSPEKLPSAKYQVEFKAKKDGYITEIIANEIGVASMMLGAGRQTKEDVIDLGVGIVLNKKVGEHVEKGENILTIHTNTKEIDDILYKLDNSITIESKGEAPTLIHKIITE</sequence>
<keyword id="KW-0328">Glycosyltransferase</keyword>
<keyword id="KW-0479">Metal-binding</keyword>
<keyword id="KW-0630">Potassium</keyword>
<keyword id="KW-0808">Transferase</keyword>
<feature type="chain" id="PRO_0000269540" description="Pyrimidine-nucleoside phosphorylase">
    <location>
        <begin position="1"/>
        <end position="433"/>
    </location>
</feature>
<feature type="binding site" evidence="1">
    <location>
        <begin position="81"/>
        <end position="83"/>
    </location>
    <ligand>
        <name>phosphate</name>
        <dbReference type="ChEBI" id="CHEBI:43474"/>
    </ligand>
</feature>
<feature type="binding site" evidence="1">
    <location>
        <position position="88"/>
    </location>
    <ligand>
        <name>K(+)</name>
        <dbReference type="ChEBI" id="CHEBI:29103"/>
    </ligand>
</feature>
<feature type="binding site" evidence="1">
    <location>
        <position position="90"/>
    </location>
    <ligand>
        <name>K(+)</name>
        <dbReference type="ChEBI" id="CHEBI:29103"/>
    </ligand>
</feature>
<feature type="binding site" evidence="1">
    <location>
        <position position="92"/>
    </location>
    <ligand>
        <name>phosphate</name>
        <dbReference type="ChEBI" id="CHEBI:43474"/>
    </ligand>
</feature>
<feature type="binding site" evidence="1">
    <location>
        <begin position="108"/>
        <end position="110"/>
    </location>
    <ligand>
        <name>phosphate</name>
        <dbReference type="ChEBI" id="CHEBI:43474"/>
    </ligand>
</feature>
<feature type="binding site" evidence="1">
    <location>
        <position position="120"/>
    </location>
    <ligand>
        <name>phosphate</name>
        <dbReference type="ChEBI" id="CHEBI:43474"/>
    </ligand>
</feature>
<feature type="binding site" evidence="1">
    <location>
        <position position="168"/>
    </location>
    <ligand>
        <name>substrate</name>
    </ligand>
</feature>
<feature type="binding site" evidence="1">
    <location>
        <position position="187"/>
    </location>
    <ligand>
        <name>substrate</name>
    </ligand>
</feature>
<feature type="binding site" evidence="1">
    <location>
        <position position="243"/>
    </location>
    <ligand>
        <name>K(+)</name>
        <dbReference type="ChEBI" id="CHEBI:29103"/>
    </ligand>
</feature>
<feature type="binding site" evidence="1">
    <location>
        <position position="246"/>
    </location>
    <ligand>
        <name>K(+)</name>
        <dbReference type="ChEBI" id="CHEBI:29103"/>
    </ligand>
</feature>
<feature type="binding site" evidence="1">
    <location>
        <position position="255"/>
    </location>
    <ligand>
        <name>K(+)</name>
        <dbReference type="ChEBI" id="CHEBI:29103"/>
    </ligand>
</feature>